<dbReference type="EC" id="3.1.1.4"/>
<dbReference type="EC" id="3.1.1.5"/>
<dbReference type="EMBL" id="BC161557">
    <property type="protein sequence ID" value="AAI61557.1"/>
    <property type="molecule type" value="mRNA"/>
</dbReference>
<dbReference type="RefSeq" id="NP_001120577.1">
    <property type="nucleotide sequence ID" value="NM_001127105.1"/>
</dbReference>
<dbReference type="RefSeq" id="XP_012816089.1">
    <property type="nucleotide sequence ID" value="XM_012960635.2"/>
</dbReference>
<dbReference type="RefSeq" id="XP_012816090.1">
    <property type="nucleotide sequence ID" value="XM_012960636.3"/>
</dbReference>
<dbReference type="RefSeq" id="XP_012816091.1">
    <property type="nucleotide sequence ID" value="XM_012960637.3"/>
</dbReference>
<dbReference type="RefSeq" id="XP_012816092.1">
    <property type="nucleotide sequence ID" value="XM_012960638.2"/>
</dbReference>
<dbReference type="RefSeq" id="XP_031755722.1">
    <property type="nucleotide sequence ID" value="XM_031899862.1"/>
</dbReference>
<dbReference type="RefSeq" id="XP_031755723.1">
    <property type="nucleotide sequence ID" value="XM_031899863.1"/>
</dbReference>
<dbReference type="SMR" id="B1WAZ6"/>
<dbReference type="FunCoup" id="B1WAZ6">
    <property type="interactions" value="1184"/>
</dbReference>
<dbReference type="STRING" id="8364.ENSXETP00000006955"/>
<dbReference type="PaxDb" id="8364-ENSXETP00000037820"/>
<dbReference type="GeneID" id="100145731"/>
<dbReference type="KEGG" id="xtr:100145731"/>
<dbReference type="AGR" id="Xenbase:XB-GENE-5838849"/>
<dbReference type="CTD" id="5321"/>
<dbReference type="Xenbase" id="XB-GENE-5838849">
    <property type="gene designation" value="pla2g4a"/>
</dbReference>
<dbReference type="eggNOG" id="KOG1012">
    <property type="taxonomic scope" value="Eukaryota"/>
</dbReference>
<dbReference type="eggNOG" id="KOG1325">
    <property type="taxonomic scope" value="Eukaryota"/>
</dbReference>
<dbReference type="HOGENOM" id="CLU_011663_1_1_1"/>
<dbReference type="InParanoid" id="B1WAZ6"/>
<dbReference type="OMA" id="NQESWVQ"/>
<dbReference type="OrthoDB" id="419768at2759"/>
<dbReference type="BRENDA" id="3.1.1.4">
    <property type="organism ID" value="8483"/>
</dbReference>
<dbReference type="Reactome" id="R-XTR-111995">
    <property type="pathway name" value="phospho-PLA2 pathway"/>
</dbReference>
<dbReference type="Reactome" id="R-XTR-1482788">
    <property type="pathway name" value="Acyl chain remodelling of PC"/>
</dbReference>
<dbReference type="Reactome" id="R-XTR-1482798">
    <property type="pathway name" value="Acyl chain remodeling of CL"/>
</dbReference>
<dbReference type="Reactome" id="R-XTR-1482801">
    <property type="pathway name" value="Acyl chain remodelling of PS"/>
</dbReference>
<dbReference type="Reactome" id="R-XTR-1482839">
    <property type="pathway name" value="Acyl chain remodelling of PE"/>
</dbReference>
<dbReference type="Reactome" id="R-XTR-1482922">
    <property type="pathway name" value="Acyl chain remodelling of PI"/>
</dbReference>
<dbReference type="Reactome" id="R-XTR-1482925">
    <property type="pathway name" value="Acyl chain remodelling of PG"/>
</dbReference>
<dbReference type="Reactome" id="R-XTR-1483115">
    <property type="pathway name" value="Hydrolysis of LPC"/>
</dbReference>
<dbReference type="Reactome" id="R-XTR-1483166">
    <property type="pathway name" value="Synthesis of PA"/>
</dbReference>
<dbReference type="Reactome" id="R-XTR-2142753">
    <property type="pathway name" value="Arachidonate metabolism"/>
</dbReference>
<dbReference type="Reactome" id="R-XTR-418592">
    <property type="pathway name" value="ADP signalling through P2Y purinoceptor 1"/>
</dbReference>
<dbReference type="Reactome" id="R-XTR-432142">
    <property type="pathway name" value="Platelet sensitization by LDL"/>
</dbReference>
<dbReference type="Reactome" id="R-XTR-6811436">
    <property type="pathway name" value="COPI-independent Golgi-to-ER retrograde traffic"/>
</dbReference>
<dbReference type="Proteomes" id="UP000008143">
    <property type="component" value="Chromosome 4"/>
</dbReference>
<dbReference type="Bgee" id="ENSXETG00000017371">
    <property type="expression patterns" value="Expressed in ovary and 13 other cell types or tissues"/>
</dbReference>
<dbReference type="ExpressionAtlas" id="B1WAZ6">
    <property type="expression patterns" value="baseline"/>
</dbReference>
<dbReference type="GO" id="GO:0031410">
    <property type="term" value="C:cytoplasmic vesicle"/>
    <property type="evidence" value="ECO:0007669"/>
    <property type="project" value="UniProtKB-KW"/>
</dbReference>
<dbReference type="GO" id="GO:0005509">
    <property type="term" value="F:calcium ion binding"/>
    <property type="evidence" value="ECO:0007669"/>
    <property type="project" value="InterPro"/>
</dbReference>
<dbReference type="GO" id="GO:0004622">
    <property type="term" value="F:lysophospholipase activity"/>
    <property type="evidence" value="ECO:0007669"/>
    <property type="project" value="UniProtKB-EC"/>
</dbReference>
<dbReference type="GO" id="GO:0004623">
    <property type="term" value="F:phospholipase A2 activity"/>
    <property type="evidence" value="ECO:0007669"/>
    <property type="project" value="UniProtKB-EC"/>
</dbReference>
<dbReference type="GO" id="GO:0009395">
    <property type="term" value="P:phospholipid catabolic process"/>
    <property type="evidence" value="ECO:0007669"/>
    <property type="project" value="InterPro"/>
</dbReference>
<dbReference type="CDD" id="cd04036">
    <property type="entry name" value="C2_cPLA2"/>
    <property type="match status" value="1"/>
</dbReference>
<dbReference type="CDD" id="cd07200">
    <property type="entry name" value="cPLA2_Grp-IVA"/>
    <property type="match status" value="1"/>
</dbReference>
<dbReference type="FunFam" id="2.60.40.150:FF:000030">
    <property type="entry name" value="Phospholipase A2"/>
    <property type="match status" value="1"/>
</dbReference>
<dbReference type="Gene3D" id="2.60.40.150">
    <property type="entry name" value="C2 domain"/>
    <property type="match status" value="1"/>
</dbReference>
<dbReference type="Gene3D" id="3.40.1090.10">
    <property type="entry name" value="Cytosolic phospholipase A2 catalytic domain"/>
    <property type="match status" value="1"/>
</dbReference>
<dbReference type="InterPro" id="IPR016035">
    <property type="entry name" value="Acyl_Trfase/lysoPLipase"/>
</dbReference>
<dbReference type="InterPro" id="IPR041847">
    <property type="entry name" value="C2_cPLA2"/>
</dbReference>
<dbReference type="InterPro" id="IPR000008">
    <property type="entry name" value="C2_dom"/>
</dbReference>
<dbReference type="InterPro" id="IPR035892">
    <property type="entry name" value="C2_domain_sf"/>
</dbReference>
<dbReference type="InterPro" id="IPR002642">
    <property type="entry name" value="LysoPLipase_cat_dom"/>
</dbReference>
<dbReference type="PANTHER" id="PTHR10728">
    <property type="entry name" value="CYTOSOLIC PHOSPHOLIPASE A2"/>
    <property type="match status" value="1"/>
</dbReference>
<dbReference type="PANTHER" id="PTHR10728:SF13">
    <property type="entry name" value="CYTOSOLIC PHOSPHOLIPASE A2"/>
    <property type="match status" value="1"/>
</dbReference>
<dbReference type="Pfam" id="PF00168">
    <property type="entry name" value="C2"/>
    <property type="match status" value="1"/>
</dbReference>
<dbReference type="Pfam" id="PF01735">
    <property type="entry name" value="PLA2_B"/>
    <property type="match status" value="1"/>
</dbReference>
<dbReference type="SMART" id="SM00239">
    <property type="entry name" value="C2"/>
    <property type="match status" value="1"/>
</dbReference>
<dbReference type="SMART" id="SM00022">
    <property type="entry name" value="PLAc"/>
    <property type="match status" value="1"/>
</dbReference>
<dbReference type="SUPFAM" id="SSF49562">
    <property type="entry name" value="C2 domain (Calcium/lipid-binding domain, CaLB)"/>
    <property type="match status" value="1"/>
</dbReference>
<dbReference type="SUPFAM" id="SSF52151">
    <property type="entry name" value="FabD/lysophospholipase-like"/>
    <property type="match status" value="1"/>
</dbReference>
<dbReference type="PROSITE" id="PS50004">
    <property type="entry name" value="C2"/>
    <property type="match status" value="1"/>
</dbReference>
<dbReference type="PROSITE" id="PS51210">
    <property type="entry name" value="PLA2C"/>
    <property type="match status" value="1"/>
</dbReference>
<accession>B1WAZ6</accession>
<comment type="function">
    <text evidence="1">Selectively hydrolyzes arachidonyl phospholipids in the sn-2 position releasing arachidonic acid. Together with its lysophospholipid activity, it is implicated in the initiation of the inflammatory response (By similarity).</text>
</comment>
<comment type="catalytic activity">
    <reaction>
        <text>a 1,2-diacyl-sn-glycero-3-phosphocholine + H2O = a 1-acyl-sn-glycero-3-phosphocholine + a fatty acid + H(+)</text>
        <dbReference type="Rhea" id="RHEA:15801"/>
        <dbReference type="ChEBI" id="CHEBI:15377"/>
        <dbReference type="ChEBI" id="CHEBI:15378"/>
        <dbReference type="ChEBI" id="CHEBI:28868"/>
        <dbReference type="ChEBI" id="CHEBI:57643"/>
        <dbReference type="ChEBI" id="CHEBI:58168"/>
        <dbReference type="EC" id="3.1.1.4"/>
    </reaction>
</comment>
<comment type="catalytic activity">
    <reaction>
        <text>a 1-acyl-sn-glycero-3-phosphocholine + H2O = sn-glycerol 3-phosphocholine + a fatty acid + H(+)</text>
        <dbReference type="Rhea" id="RHEA:15177"/>
        <dbReference type="ChEBI" id="CHEBI:15377"/>
        <dbReference type="ChEBI" id="CHEBI:15378"/>
        <dbReference type="ChEBI" id="CHEBI:16870"/>
        <dbReference type="ChEBI" id="CHEBI:28868"/>
        <dbReference type="ChEBI" id="CHEBI:58168"/>
        <dbReference type="EC" id="3.1.1.5"/>
    </reaction>
</comment>
<comment type="activity regulation">
    <text evidence="1">Stimulated by agonists such as ATP, EGF, thrombin and bradykinin as well as by cytosolic Ca(2+).</text>
</comment>
<comment type="subcellular location">
    <subcellularLocation>
        <location evidence="1">Cytoplasm</location>
    </subcellularLocation>
    <subcellularLocation>
        <location evidence="1">Cytoplasmic vesicle</location>
    </subcellularLocation>
    <text evidence="1">Translocates to membrane vesicles in a calcium-dependent fashion.</text>
</comment>
<comment type="domain">
    <text evidence="1">The N-terminal C2 domain associates with lipid membranes upon calcium binding. It modulates enzyme activity by presenting the active site to its substrate in response to elevations of cytosolic Ca(2+) (By similarity).</text>
</comment>
<gene>
    <name type="primary">pla2g4a</name>
    <name type="synonym">cpla2</name>
    <name type="synonym">pla2g4</name>
</gene>
<keyword id="KW-0106">Calcium</keyword>
<keyword id="KW-0963">Cytoplasm</keyword>
<keyword id="KW-0968">Cytoplasmic vesicle</keyword>
<keyword id="KW-0378">Hydrolase</keyword>
<keyword id="KW-0442">Lipid degradation</keyword>
<keyword id="KW-0443">Lipid metabolism</keyword>
<keyword id="KW-0479">Metal-binding</keyword>
<keyword id="KW-1185">Reference proteome</keyword>
<reference key="1">
    <citation type="submission" date="2008-04" db="EMBL/GenBank/DDBJ databases">
        <authorList>
            <consortium name="NIH - Xenopus Gene Collection (XGC) project"/>
        </authorList>
    </citation>
    <scope>NUCLEOTIDE SEQUENCE [LARGE SCALE MRNA]</scope>
    <source>
        <strain>N6</strain>
        <tissue>Intestine</tissue>
    </source>
</reference>
<protein>
    <recommendedName>
        <fullName>Cytosolic phospholipase A2</fullName>
        <shortName>cPLA2</shortName>
    </recommendedName>
    <alternativeName>
        <fullName>Phospholipase A2 group IVA</fullName>
    </alternativeName>
    <domain>
        <recommendedName>
            <fullName>Phospholipase A2</fullName>
            <ecNumber>3.1.1.4</ecNumber>
        </recommendedName>
        <alternativeName>
            <fullName>Phosphatidylcholine 2-acylhydrolase</fullName>
        </alternativeName>
    </domain>
    <domain>
        <recommendedName>
            <fullName>Lysophospholipase</fullName>
            <ecNumber>3.1.1.5</ecNumber>
        </recommendedName>
    </domain>
</protein>
<name>PA24A_XENTR</name>
<feature type="chain" id="PRO_0000345137" description="Cytosolic phospholipase A2">
    <location>
        <begin position="1"/>
        <end position="749"/>
    </location>
</feature>
<feature type="domain" description="C2" evidence="2">
    <location>
        <begin position="1"/>
        <end position="124"/>
    </location>
</feature>
<feature type="domain" description="PLA2c" evidence="3">
    <location>
        <begin position="138"/>
        <end position="740"/>
    </location>
</feature>
<feature type="region of interest" description="Phospholipid binding" evidence="5">
    <location>
        <begin position="1"/>
        <end position="178"/>
    </location>
</feature>
<feature type="region of interest" description="Disordered" evidence="4">
    <location>
        <begin position="417"/>
        <end position="458"/>
    </location>
</feature>
<feature type="compositionally biased region" description="Basic and acidic residues" evidence="4">
    <location>
        <begin position="442"/>
        <end position="457"/>
    </location>
</feature>
<feature type="active site" description="Nucleophile" evidence="1">
    <location>
        <position position="229"/>
    </location>
</feature>
<feature type="active site" description="Proton acceptor" evidence="1">
    <location>
        <position position="549"/>
    </location>
</feature>
<feature type="binding site" evidence="1">
    <location>
        <position position="40"/>
    </location>
    <ligand>
        <name>Ca(2+)</name>
        <dbReference type="ChEBI" id="CHEBI:29108"/>
        <label>1</label>
    </ligand>
</feature>
<feature type="binding site" evidence="1">
    <location>
        <position position="40"/>
    </location>
    <ligand>
        <name>Ca(2+)</name>
        <dbReference type="ChEBI" id="CHEBI:29108"/>
        <label>2</label>
    </ligand>
</feature>
<feature type="binding site" evidence="1">
    <location>
        <position position="41"/>
    </location>
    <ligand>
        <name>Ca(2+)</name>
        <dbReference type="ChEBI" id="CHEBI:29108"/>
        <label>1</label>
    </ligand>
</feature>
<feature type="binding site" evidence="1">
    <location>
        <position position="43"/>
    </location>
    <ligand>
        <name>Ca(2+)</name>
        <dbReference type="ChEBI" id="CHEBI:29108"/>
        <label>1</label>
    </ligand>
</feature>
<feature type="binding site" evidence="1">
    <location>
        <position position="43"/>
    </location>
    <ligand>
        <name>Ca(2+)</name>
        <dbReference type="ChEBI" id="CHEBI:29108"/>
        <label>2</label>
    </ligand>
</feature>
<feature type="binding site" evidence="1">
    <location>
        <position position="65"/>
    </location>
    <ligand>
        <name>Ca(2+)</name>
        <dbReference type="ChEBI" id="CHEBI:29108"/>
        <label>1</label>
    </ligand>
</feature>
<feature type="binding site" evidence="1">
    <location>
        <position position="93"/>
    </location>
    <ligand>
        <name>Ca(2+)</name>
        <dbReference type="ChEBI" id="CHEBI:29108"/>
        <label>2</label>
    </ligand>
</feature>
<feature type="binding site" evidence="1">
    <location>
        <position position="94"/>
    </location>
    <ligand>
        <name>Ca(2+)</name>
        <dbReference type="ChEBI" id="CHEBI:29108"/>
        <label>2</label>
    </ligand>
</feature>
<feature type="binding site" evidence="1">
    <location>
        <position position="95"/>
    </location>
    <ligand>
        <name>Ca(2+)</name>
        <dbReference type="ChEBI" id="CHEBI:29108"/>
        <label>2</label>
    </ligand>
</feature>
<sequence>MASIDPYQHIIVEHQYSHRFTVTVIKATNVTKGTFGDMLDTPDPYVELYISSAPDSRKRTKHFNNNINPVWNETFEFILDPNQDNVLEITLMDANYVMDESLGTTTFPISSVKPGEKKQVPFTFNKVTEMILEFLLEVCSSTDLRFSMALCDQEKFFRQKRKNQVINGLRKLLGPEKTKDLNPTSRDVPVIAVLGSGGGFRAMIGFSGVMKALFESGVLDCVTYIAGLSGSTWYMSALYSHADFPNKGPKEINKELMNNVSHNPLLLLTPQKVKRYIEALWKKKSSGQPVTFTDIFAMLIGETLIKDRMNRKLSHMQEKISHGQCPLPLFTCLHVKPDVSELMFADWVEFSPYEIGMAKYGTFMPPDHFGSKFFMGTVIKKYEENPLHFLMGVWGSAFSILINRVLGVSTNNQGSTMEEEIENLKPKHILGNDSSDSDDEMQEPKGTENSKAEEEYQRNNQASWVQRMLMALLGDSALFNTREGRAGKVHNFMLGLNLNTSYPYSPLSGLCTQQSMEEDEFDAAVADPDEFEQIYEPLDVKSKKIHIVDSGLTFNLPYPLILRPQRGVDLIISFDFSARPSDSSPPFKELLLAEKWARMNKLPFPKIDPHVFDREGLKECYIFKPKNPSVEKDCPTVIHFVLANLQFRNFKAPGVPRETAEEKEFADFDIFDDPETPFSTFNFQYPNEAFKRLHDLMEFNTLNNINVIKQAMVESIEYRKQHPSRCSVSLNDVEARKLLHKDSQSKFQM</sequence>
<organism>
    <name type="scientific">Xenopus tropicalis</name>
    <name type="common">Western clawed frog</name>
    <name type="synonym">Silurana tropicalis</name>
    <dbReference type="NCBI Taxonomy" id="8364"/>
    <lineage>
        <taxon>Eukaryota</taxon>
        <taxon>Metazoa</taxon>
        <taxon>Chordata</taxon>
        <taxon>Craniata</taxon>
        <taxon>Vertebrata</taxon>
        <taxon>Euteleostomi</taxon>
        <taxon>Amphibia</taxon>
        <taxon>Batrachia</taxon>
        <taxon>Anura</taxon>
        <taxon>Pipoidea</taxon>
        <taxon>Pipidae</taxon>
        <taxon>Xenopodinae</taxon>
        <taxon>Xenopus</taxon>
        <taxon>Silurana</taxon>
    </lineage>
</organism>
<evidence type="ECO:0000250" key="1"/>
<evidence type="ECO:0000255" key="2">
    <source>
        <dbReference type="PROSITE-ProRule" id="PRU00041"/>
    </source>
</evidence>
<evidence type="ECO:0000255" key="3">
    <source>
        <dbReference type="PROSITE-ProRule" id="PRU00555"/>
    </source>
</evidence>
<evidence type="ECO:0000256" key="4">
    <source>
        <dbReference type="SAM" id="MobiDB-lite"/>
    </source>
</evidence>
<evidence type="ECO:0000305" key="5"/>
<proteinExistence type="evidence at transcript level"/>